<keyword id="KW-0145">Chemotaxis</keyword>
<keyword id="KW-0963">Cytoplasm</keyword>
<keyword id="KW-1185">Reference proteome</keyword>
<keyword id="KW-0677">Repeat</keyword>
<keyword id="KW-0853">WD repeat</keyword>
<evidence type="ECO:0000269" key="1">
    <source>
    </source>
</evidence>
<evidence type="ECO:0000305" key="2"/>
<dbReference type="EMBL" id="AAFI02000194">
    <property type="protein sequence ID" value="EAL61099.1"/>
    <property type="molecule type" value="Genomic_DNA"/>
</dbReference>
<dbReference type="RefSeq" id="XP_629512.1">
    <property type="nucleotide sequence ID" value="XM_629510.1"/>
</dbReference>
<dbReference type="SMR" id="Q54D08"/>
<dbReference type="FunCoup" id="Q54D08">
    <property type="interactions" value="500"/>
</dbReference>
<dbReference type="STRING" id="44689.Q54D08"/>
<dbReference type="PaxDb" id="44689-DDB0233210"/>
<dbReference type="EnsemblProtists" id="EAL61099">
    <property type="protein sequence ID" value="EAL61099"/>
    <property type="gene ID" value="DDB_G0292592"/>
</dbReference>
<dbReference type="GeneID" id="8628763"/>
<dbReference type="KEGG" id="ddi:DDB_G0292592"/>
<dbReference type="dictyBase" id="DDB_G0292592">
    <property type="gene designation" value="lst8"/>
</dbReference>
<dbReference type="VEuPathDB" id="AmoebaDB:DDB_G0292592"/>
<dbReference type="eggNOG" id="KOG0315">
    <property type="taxonomic scope" value="Eukaryota"/>
</dbReference>
<dbReference type="HOGENOM" id="CLU_000288_57_5_1"/>
<dbReference type="InParanoid" id="Q54D08"/>
<dbReference type="OMA" id="VQRNYKH"/>
<dbReference type="PhylomeDB" id="Q54D08"/>
<dbReference type="Reactome" id="R-DDI-1257604">
    <property type="pathway name" value="PIP3 activates AKT signaling"/>
</dbReference>
<dbReference type="Reactome" id="R-DDI-1632852">
    <property type="pathway name" value="Macroautophagy"/>
</dbReference>
<dbReference type="Reactome" id="R-DDI-165159">
    <property type="pathway name" value="MTOR signalling"/>
</dbReference>
<dbReference type="Reactome" id="R-DDI-166208">
    <property type="pathway name" value="mTORC1-mediated signalling"/>
</dbReference>
<dbReference type="Reactome" id="R-DDI-3371571">
    <property type="pathway name" value="HSF1-dependent transactivation"/>
</dbReference>
<dbReference type="Reactome" id="R-DDI-380972">
    <property type="pathway name" value="Energy dependent regulation of mTOR by LKB1-AMPK"/>
</dbReference>
<dbReference type="Reactome" id="R-DDI-389357">
    <property type="pathway name" value="CD28 dependent PI3K/Akt signaling"/>
</dbReference>
<dbReference type="Reactome" id="R-DDI-5218920">
    <property type="pathway name" value="VEGFR2 mediated vascular permeability"/>
</dbReference>
<dbReference type="Reactome" id="R-DDI-5628897">
    <property type="pathway name" value="TP53 Regulates Metabolic Genes"/>
</dbReference>
<dbReference type="Reactome" id="R-DDI-6804757">
    <property type="pathway name" value="Regulation of TP53 Degradation"/>
</dbReference>
<dbReference type="Reactome" id="R-DDI-8943724">
    <property type="pathway name" value="Regulation of PTEN gene transcription"/>
</dbReference>
<dbReference type="Reactome" id="R-DDI-9639288">
    <property type="pathway name" value="Amino acids regulate mTORC1"/>
</dbReference>
<dbReference type="Reactome" id="R-DDI-9856530">
    <property type="pathway name" value="High laminar flow shear stress activates signaling by PIEZO1 and PECAM1:CDH5:KDR in endothelial cells"/>
</dbReference>
<dbReference type="PRO" id="PR:Q54D08"/>
<dbReference type="Proteomes" id="UP000002195">
    <property type="component" value="Chromosome 6"/>
</dbReference>
<dbReference type="GO" id="GO:0005776">
    <property type="term" value="C:autophagosome"/>
    <property type="evidence" value="ECO:0000314"/>
    <property type="project" value="dictyBase"/>
</dbReference>
<dbReference type="GO" id="GO:0031252">
    <property type="term" value="C:cell leading edge"/>
    <property type="evidence" value="ECO:0000314"/>
    <property type="project" value="dictyBase"/>
</dbReference>
<dbReference type="GO" id="GO:0005737">
    <property type="term" value="C:cytoplasm"/>
    <property type="evidence" value="ECO:0000250"/>
    <property type="project" value="UniProtKB"/>
</dbReference>
<dbReference type="GO" id="GO:0031931">
    <property type="term" value="C:TORC1 complex"/>
    <property type="evidence" value="ECO:0000318"/>
    <property type="project" value="GO_Central"/>
</dbReference>
<dbReference type="GO" id="GO:0031932">
    <property type="term" value="C:TORC2 complex"/>
    <property type="evidence" value="ECO:0000314"/>
    <property type="project" value="dictyBase"/>
</dbReference>
<dbReference type="GO" id="GO:0010856">
    <property type="term" value="F:adenylate cyclase activator activity"/>
    <property type="evidence" value="ECO:0000314"/>
    <property type="project" value="dictyBase"/>
</dbReference>
<dbReference type="GO" id="GO:0019887">
    <property type="term" value="F:protein kinase regulator activity"/>
    <property type="evidence" value="ECO:0000315"/>
    <property type="project" value="dictyBase"/>
</dbReference>
<dbReference type="GO" id="GO:0031152">
    <property type="term" value="P:aggregation involved in sorocarp development"/>
    <property type="evidence" value="ECO:0000315"/>
    <property type="project" value="dictyBase"/>
</dbReference>
<dbReference type="GO" id="GO:0051702">
    <property type="term" value="P:biological process involved in interaction with symbiont"/>
    <property type="evidence" value="ECO:0000315"/>
    <property type="project" value="dictyBase"/>
</dbReference>
<dbReference type="GO" id="GO:0043327">
    <property type="term" value="P:chemotaxis to cAMP"/>
    <property type="evidence" value="ECO:0000315"/>
    <property type="project" value="dictyBase"/>
</dbReference>
<dbReference type="GO" id="GO:0140986">
    <property type="term" value="P:G protein-coupled chemorepellent receptor signaling pathway"/>
    <property type="evidence" value="ECO:0000315"/>
    <property type="project" value="dictyBase"/>
</dbReference>
<dbReference type="GO" id="GO:0050765">
    <property type="term" value="P:negative regulation of phagocytosis"/>
    <property type="evidence" value="ECO:0000314"/>
    <property type="project" value="dictyBase"/>
</dbReference>
<dbReference type="GO" id="GO:0110094">
    <property type="term" value="P:polyphosphate-mediated signaling"/>
    <property type="evidence" value="ECO:0000315"/>
    <property type="project" value="dictyBase"/>
</dbReference>
<dbReference type="GO" id="GO:0030838">
    <property type="term" value="P:positive regulation of actin filament polymerization"/>
    <property type="evidence" value="ECO:0000315"/>
    <property type="project" value="dictyBase"/>
</dbReference>
<dbReference type="GO" id="GO:0051897">
    <property type="term" value="P:positive regulation of phosphatidylinositol 3-kinase/protein kinase B signal transduction"/>
    <property type="evidence" value="ECO:0000315"/>
    <property type="project" value="dictyBase"/>
</dbReference>
<dbReference type="GO" id="GO:0032956">
    <property type="term" value="P:regulation of actin cytoskeleton organization"/>
    <property type="evidence" value="ECO:0000318"/>
    <property type="project" value="GO_Central"/>
</dbReference>
<dbReference type="GO" id="GO:0043520">
    <property type="term" value="P:regulation of myosin II filament assembly"/>
    <property type="evidence" value="ECO:0000315"/>
    <property type="project" value="dictyBase"/>
</dbReference>
<dbReference type="GO" id="GO:0031929">
    <property type="term" value="P:TOR signaling"/>
    <property type="evidence" value="ECO:0000318"/>
    <property type="project" value="GO_Central"/>
</dbReference>
<dbReference type="GO" id="GO:0038203">
    <property type="term" value="P:TORC2 signaling"/>
    <property type="evidence" value="ECO:0000314"/>
    <property type="project" value="dictyBase"/>
</dbReference>
<dbReference type="CDD" id="cd00200">
    <property type="entry name" value="WD40"/>
    <property type="match status" value="1"/>
</dbReference>
<dbReference type="FunFam" id="2.130.10.10:FF:000505">
    <property type="entry name" value="Blast:Protein LST8 homolog"/>
    <property type="match status" value="1"/>
</dbReference>
<dbReference type="Gene3D" id="2.130.10.10">
    <property type="entry name" value="YVTN repeat-like/Quinoprotein amine dehydrogenase"/>
    <property type="match status" value="1"/>
</dbReference>
<dbReference type="InterPro" id="IPR020472">
    <property type="entry name" value="G-protein_beta_WD-40_rep"/>
</dbReference>
<dbReference type="InterPro" id="IPR037588">
    <property type="entry name" value="MLST8"/>
</dbReference>
<dbReference type="InterPro" id="IPR015943">
    <property type="entry name" value="WD40/YVTN_repeat-like_dom_sf"/>
</dbReference>
<dbReference type="InterPro" id="IPR019775">
    <property type="entry name" value="WD40_repeat_CS"/>
</dbReference>
<dbReference type="InterPro" id="IPR036322">
    <property type="entry name" value="WD40_repeat_dom_sf"/>
</dbReference>
<dbReference type="InterPro" id="IPR001680">
    <property type="entry name" value="WD40_rpt"/>
</dbReference>
<dbReference type="PANTHER" id="PTHR19842">
    <property type="entry name" value="G BETA-LIKE PROTEIN GBL"/>
    <property type="match status" value="1"/>
</dbReference>
<dbReference type="PANTHER" id="PTHR19842:SF0">
    <property type="entry name" value="TARGET OF RAPAMYCIN COMPLEX SUBUNIT LST8"/>
    <property type="match status" value="1"/>
</dbReference>
<dbReference type="Pfam" id="PF00400">
    <property type="entry name" value="WD40"/>
    <property type="match status" value="5"/>
</dbReference>
<dbReference type="PRINTS" id="PR00320">
    <property type="entry name" value="GPROTEINBRPT"/>
</dbReference>
<dbReference type="SMART" id="SM00320">
    <property type="entry name" value="WD40"/>
    <property type="match status" value="5"/>
</dbReference>
<dbReference type="SUPFAM" id="SSF50978">
    <property type="entry name" value="WD40 repeat-like"/>
    <property type="match status" value="1"/>
</dbReference>
<dbReference type="PROSITE" id="PS00678">
    <property type="entry name" value="WD_REPEATS_1"/>
    <property type="match status" value="4"/>
</dbReference>
<dbReference type="PROSITE" id="PS50082">
    <property type="entry name" value="WD_REPEATS_2"/>
    <property type="match status" value="5"/>
</dbReference>
<dbReference type="PROSITE" id="PS50294">
    <property type="entry name" value="WD_REPEATS_REGION"/>
    <property type="match status" value="1"/>
</dbReference>
<accession>Q54D08</accession>
<name>LST8_DICDI</name>
<gene>
    <name type="primary">lst8</name>
    <name type="ORF">DDB_G0292592</name>
</gene>
<organism>
    <name type="scientific">Dictyostelium discoideum</name>
    <name type="common">Social amoeba</name>
    <dbReference type="NCBI Taxonomy" id="44689"/>
    <lineage>
        <taxon>Eukaryota</taxon>
        <taxon>Amoebozoa</taxon>
        <taxon>Evosea</taxon>
        <taxon>Eumycetozoa</taxon>
        <taxon>Dictyostelia</taxon>
        <taxon>Dictyosteliales</taxon>
        <taxon>Dictyosteliaceae</taxon>
        <taxon>Dictyostelium</taxon>
    </lineage>
</organism>
<protein>
    <recommendedName>
        <fullName>Protein LST8 homolog</fullName>
    </recommendedName>
    <alternativeName>
        <fullName>Lethal with sec thirteen 8 protein</fullName>
    </alternativeName>
</protein>
<comment type="function">
    <text evidence="1">Plays a role in regulation of adenylate cyclase and protein kinase B (PKB) activation during aggregation. Involved in both chemotaxis and signal relay.</text>
</comment>
<comment type="subunit">
    <text evidence="1">Part of a complex, TORC1, consisting of tor, raptor and lst8. Part of a complex, TORC2, consisting of tor, lst8, piaA and ripA. Additional proteins, such as 14-3-3 and heat-shock proteins, may also belong to the TORC2 complex.</text>
</comment>
<comment type="subcellular location">
    <subcellularLocation>
        <location evidence="2">Cytoplasm</location>
    </subcellularLocation>
</comment>
<comment type="disruption phenotype">
    <text evidence="1">Cells have serious developmental defects, because they are unable to activate the aggregation-stage adenylyl cyclase acaA in response to chemoattractant and are defective in chemotaxis.</text>
</comment>
<comment type="similarity">
    <text evidence="2">Belongs to the WD repeat LST8 family.</text>
</comment>
<reference key="1">
    <citation type="journal article" date="2005" name="Nature">
        <title>The genome of the social amoeba Dictyostelium discoideum.</title>
        <authorList>
            <person name="Eichinger L."/>
            <person name="Pachebat J.A."/>
            <person name="Gloeckner G."/>
            <person name="Rajandream M.A."/>
            <person name="Sucgang R."/>
            <person name="Berriman M."/>
            <person name="Song J."/>
            <person name="Olsen R."/>
            <person name="Szafranski K."/>
            <person name="Xu Q."/>
            <person name="Tunggal B."/>
            <person name="Kummerfeld S."/>
            <person name="Madera M."/>
            <person name="Konfortov B.A."/>
            <person name="Rivero F."/>
            <person name="Bankier A.T."/>
            <person name="Lehmann R."/>
            <person name="Hamlin N."/>
            <person name="Davies R."/>
            <person name="Gaudet P."/>
            <person name="Fey P."/>
            <person name="Pilcher K."/>
            <person name="Chen G."/>
            <person name="Saunders D."/>
            <person name="Sodergren E.J."/>
            <person name="Davis P."/>
            <person name="Kerhornou A."/>
            <person name="Nie X."/>
            <person name="Hall N."/>
            <person name="Anjard C."/>
            <person name="Hemphill L."/>
            <person name="Bason N."/>
            <person name="Farbrother P."/>
            <person name="Desany B."/>
            <person name="Just E."/>
            <person name="Morio T."/>
            <person name="Rost R."/>
            <person name="Churcher C.M."/>
            <person name="Cooper J."/>
            <person name="Haydock S."/>
            <person name="van Driessche N."/>
            <person name="Cronin A."/>
            <person name="Goodhead I."/>
            <person name="Muzny D.M."/>
            <person name="Mourier T."/>
            <person name="Pain A."/>
            <person name="Lu M."/>
            <person name="Harper D."/>
            <person name="Lindsay R."/>
            <person name="Hauser H."/>
            <person name="James K.D."/>
            <person name="Quiles M."/>
            <person name="Madan Babu M."/>
            <person name="Saito T."/>
            <person name="Buchrieser C."/>
            <person name="Wardroper A."/>
            <person name="Felder M."/>
            <person name="Thangavelu M."/>
            <person name="Johnson D."/>
            <person name="Knights A."/>
            <person name="Loulseged H."/>
            <person name="Mungall K.L."/>
            <person name="Oliver K."/>
            <person name="Price C."/>
            <person name="Quail M.A."/>
            <person name="Urushihara H."/>
            <person name="Hernandez J."/>
            <person name="Rabbinowitsch E."/>
            <person name="Steffen D."/>
            <person name="Sanders M."/>
            <person name="Ma J."/>
            <person name="Kohara Y."/>
            <person name="Sharp S."/>
            <person name="Simmonds M.N."/>
            <person name="Spiegler S."/>
            <person name="Tivey A."/>
            <person name="Sugano S."/>
            <person name="White B."/>
            <person name="Walker D."/>
            <person name="Woodward J.R."/>
            <person name="Winckler T."/>
            <person name="Tanaka Y."/>
            <person name="Shaulsky G."/>
            <person name="Schleicher M."/>
            <person name="Weinstock G.M."/>
            <person name="Rosenthal A."/>
            <person name="Cox E.C."/>
            <person name="Chisholm R.L."/>
            <person name="Gibbs R.A."/>
            <person name="Loomis W.F."/>
            <person name="Platzer M."/>
            <person name="Kay R.R."/>
            <person name="Williams J.G."/>
            <person name="Dear P.H."/>
            <person name="Noegel A.A."/>
            <person name="Barrell B.G."/>
            <person name="Kuspa A."/>
        </authorList>
    </citation>
    <scope>NUCLEOTIDE SEQUENCE [LARGE SCALE GENOMIC DNA]</scope>
    <source>
        <strain>AX4</strain>
    </source>
</reference>
<reference key="2">
    <citation type="journal article" date="2005" name="Mol. Biol. Cell">
        <title>TOR complex 2 integrates cell movement during chemotaxis and signal relay in Dictyostelium.</title>
        <authorList>
            <person name="Lee S."/>
            <person name="Comer F.I."/>
            <person name="Sasaki A."/>
            <person name="McLeod I.X."/>
            <person name="Duong Y."/>
            <person name="Okumura K."/>
            <person name="Yates J.R. III"/>
            <person name="Parent C.A."/>
            <person name="Firtel R.A."/>
        </authorList>
    </citation>
    <scope>FUNCTION</scope>
    <scope>IDENTIFICATION IN A TORC1 AND TORC2 COMPLEX</scope>
    <scope>DISRUPTION PHENOTYPE</scope>
    <scope>IDENTIFICATION BY MASS SPECTROMETRY</scope>
</reference>
<feature type="chain" id="PRO_0000326507" description="Protein LST8 homolog">
    <location>
        <begin position="1"/>
        <end position="304"/>
    </location>
</feature>
<feature type="repeat" description="WD 1">
    <location>
        <begin position="1"/>
        <end position="28"/>
    </location>
</feature>
<feature type="repeat" description="WD 2">
    <location>
        <begin position="31"/>
        <end position="69"/>
    </location>
</feature>
<feature type="repeat" description="WD 3">
    <location>
        <begin position="74"/>
        <end position="113"/>
    </location>
</feature>
<feature type="repeat" description="WD 4">
    <location>
        <begin position="115"/>
        <end position="154"/>
    </location>
</feature>
<feature type="repeat" description="WD 5">
    <location>
        <begin position="158"/>
        <end position="197"/>
    </location>
</feature>
<feature type="repeat" description="WD 6">
    <location>
        <begin position="205"/>
        <end position="244"/>
    </location>
</feature>
<feature type="repeat" description="WD 7">
    <location>
        <begin position="247"/>
        <end position="286"/>
    </location>
</feature>
<proteinExistence type="evidence at protein level"/>
<sequence length="304" mass="33481">MPGIILATASYDHTIKFWDPPSGGCYRSIDCGEFHINRLEITHDKLYIAAAGNPQTRLFEVNTNNNSPAMSFDGHKGNVTGVGFQKEGKWMYTGSEDGTVKIWDLKAPGCQRDYECSAPVNTVVLHPNQAELISGDQNGSIRVWDLISNTCSRELVPDGEVGITSLTISSDGGLVVASNTKGKCFVWRLGEDDTSRFEPLQKIEAHNAPILKTLFSPDTKLLATCSADHTVKIWNTKKFNVVQTLNGHQRWVWDCAFSNDSAYLVTGSSDHLSRLWDLHQGDAVKTYSGHIKAVNAVALNDLPR</sequence>